<reference key="1">
    <citation type="journal article" date="1999" name="Nat. Genet.">
        <title>Mutations in a novel retina-specific gene cause autosomal dominant retinitis pigmentosa.</title>
        <authorList>
            <person name="Sullivan L.S."/>
            <person name="Heckenlively J.R."/>
            <person name="Bowne S.J."/>
            <person name="Zuo J."/>
            <person name="Hide W.A."/>
            <person name="Gal A."/>
            <person name="Denton M."/>
            <person name="Inglehearn C.F."/>
            <person name="Blanton S.H."/>
            <person name="Daiger S.P."/>
        </authorList>
    </citation>
    <scope>NUCLEOTIDE SEQUENCE [GENOMIC DNA / MRNA]</scope>
    <scope>VARIANTS HIS-872; TYR-985; THR-1670; PRO-1691 AND TYR-2033</scope>
    <source>
        <tissue>Retina</tissue>
    </source>
</reference>
<reference key="2">
    <citation type="journal article" date="1999" name="Nat. Genet.">
        <title>Mutations in a gene encoding a new oxygen-regulated photoreceptor protein cause dominant retinitis pigmentosa.</title>
        <authorList>
            <person name="Pierce E.A."/>
            <person name="Quinn T."/>
            <person name="Meehan T."/>
            <person name="McGee T.L."/>
            <person name="Berson E.L."/>
            <person name="Dryja T.P."/>
        </authorList>
    </citation>
    <scope>NUCLEOTIDE SEQUENCE [MRNA]</scope>
    <scope>INVOLVEMENT IN RP1</scope>
    <source>
        <tissue>Retina</tissue>
    </source>
</reference>
<reference key="3">
    <citation type="journal article" date="1999" name="Hum. Mol. Genet.">
        <title>A nonsense mutation in a novel gene is associated with retinitis pigmentosa in a family linked to the RP1 locus.</title>
        <authorList>
            <person name="Guillonneau X."/>
            <person name="Piriev N.I."/>
            <person name="Danciger M."/>
            <person name="Kozak C.A."/>
            <person name="Cideciyan A.V."/>
            <person name="Jacobson S.G."/>
            <person name="Farber D.B."/>
        </authorList>
    </citation>
    <scope>NUCLEOTIDE SEQUENCE [GENOMIC DNA / MRNA]</scope>
</reference>
<reference key="4">
    <citation type="journal article" date="2006" name="Nature">
        <title>DNA sequence and analysis of human chromosome 8.</title>
        <authorList>
            <person name="Nusbaum C."/>
            <person name="Mikkelsen T.S."/>
            <person name="Zody M.C."/>
            <person name="Asakawa S."/>
            <person name="Taudien S."/>
            <person name="Garber M."/>
            <person name="Kodira C.D."/>
            <person name="Schueler M.G."/>
            <person name="Shimizu A."/>
            <person name="Whittaker C.A."/>
            <person name="Chang J.L."/>
            <person name="Cuomo C.A."/>
            <person name="Dewar K."/>
            <person name="FitzGerald M.G."/>
            <person name="Yang X."/>
            <person name="Allen N.R."/>
            <person name="Anderson S."/>
            <person name="Asakawa T."/>
            <person name="Blechschmidt K."/>
            <person name="Bloom T."/>
            <person name="Borowsky M.L."/>
            <person name="Butler J."/>
            <person name="Cook A."/>
            <person name="Corum B."/>
            <person name="DeArellano K."/>
            <person name="DeCaprio D."/>
            <person name="Dooley K.T."/>
            <person name="Dorris L. III"/>
            <person name="Engels R."/>
            <person name="Gloeckner G."/>
            <person name="Hafez N."/>
            <person name="Hagopian D.S."/>
            <person name="Hall J.L."/>
            <person name="Ishikawa S.K."/>
            <person name="Jaffe D.B."/>
            <person name="Kamat A."/>
            <person name="Kudoh J."/>
            <person name="Lehmann R."/>
            <person name="Lokitsang T."/>
            <person name="Macdonald P."/>
            <person name="Major J.E."/>
            <person name="Matthews C.D."/>
            <person name="Mauceli E."/>
            <person name="Menzel U."/>
            <person name="Mihalev A.H."/>
            <person name="Minoshima S."/>
            <person name="Murayama Y."/>
            <person name="Naylor J.W."/>
            <person name="Nicol R."/>
            <person name="Nguyen C."/>
            <person name="O'Leary S.B."/>
            <person name="O'Neill K."/>
            <person name="Parker S.C.J."/>
            <person name="Polley A."/>
            <person name="Raymond C.K."/>
            <person name="Reichwald K."/>
            <person name="Rodriguez J."/>
            <person name="Sasaki T."/>
            <person name="Schilhabel M."/>
            <person name="Siddiqui R."/>
            <person name="Smith C.L."/>
            <person name="Sneddon T.P."/>
            <person name="Talamas J.A."/>
            <person name="Tenzin P."/>
            <person name="Topham K."/>
            <person name="Venkataraman V."/>
            <person name="Wen G."/>
            <person name="Yamazaki S."/>
            <person name="Young S.K."/>
            <person name="Zeng Q."/>
            <person name="Zimmer A.R."/>
            <person name="Rosenthal A."/>
            <person name="Birren B.W."/>
            <person name="Platzer M."/>
            <person name="Shimizu N."/>
            <person name="Lander E.S."/>
        </authorList>
    </citation>
    <scope>NUCLEOTIDE SEQUENCE [LARGE SCALE GENOMIC DNA]</scope>
</reference>
<reference key="5">
    <citation type="journal article" date="2002" name="Invest. Ophthalmol. Vis. Sci.">
        <title>Identification and subcellular localization of the RP1 protein in human and mouse photoreceptors.</title>
        <authorList>
            <person name="Liu Q."/>
            <person name="Zhou J."/>
            <person name="Daiger S.P."/>
            <person name="Farber D.B."/>
            <person name="Heckenlively J.R."/>
            <person name="Smith J.E."/>
            <person name="Sullivan L.S."/>
            <person name="Zuo J."/>
            <person name="Milam A.H."/>
            <person name="Pierce E.A."/>
        </authorList>
    </citation>
    <scope>SUBCELLULAR LOCATION</scope>
</reference>
<reference key="6">
    <citation type="journal article" date="2012" name="Hum. Mutat.">
        <title>RP1 and autosomal dominant rod-cone dystrophy: Novel mutations, a review of published variants, and genotype-phenotype correlation.</title>
        <authorList>
            <person name="Audo I."/>
            <person name="Mohand-Said S."/>
            <person name="Dhaenens C.M."/>
            <person name="Germain A."/>
            <person name="Orhan E."/>
            <person name="Antonio A."/>
            <person name="Hamel C."/>
            <person name="Sahel J.A."/>
            <person name="Bhattacharya S.S."/>
            <person name="Zeitz C."/>
        </authorList>
    </citation>
    <scope>INVOLVEMENT IN RP1</scope>
</reference>
<reference key="7">
    <citation type="journal article" date="1999" name="Hum. Mol. Genet.">
        <title>Mutations in the RP1 gene causing autosomal dominant retinitis pigmentosa.</title>
        <authorList>
            <person name="Bowne S.J."/>
            <person name="Daiger S.P."/>
            <person name="Hims M.M."/>
            <person name="Sohocki M.M."/>
            <person name="Malone K.A."/>
            <person name="McKie A.B."/>
            <person name="Heckenlively J.R."/>
            <person name="Birch D.G."/>
            <person name="Inglehearn C.F."/>
            <person name="Bhattacharya S.S."/>
            <person name="Bird A."/>
            <person name="Sullivan L.S."/>
        </authorList>
    </citation>
    <scope>VARIANTS RP1 ASN-663 AND PRO-1808</scope>
    <scope>VARIANT GLN-1595</scope>
</reference>
<reference key="8">
    <citation type="journal article" date="2000" name="Invest. Ophthalmol. Vis. Sci.">
        <title>RP1 protein truncating mutations predominate at the RP1 adRP locus.</title>
        <authorList>
            <person name="Payne A."/>
            <person name="Vithana E."/>
            <person name="Khaliq S."/>
            <person name="Hameed A."/>
            <person name="Deller J."/>
            <person name="Abu-Safieh L."/>
            <person name="Kermani S."/>
            <person name="Leroy B.P."/>
            <person name="Mehdi S.Q."/>
            <person name="Moore A.T."/>
            <person name="Bird A.C."/>
            <person name="Bhattacharya S.S."/>
        </authorList>
    </citation>
    <scope>VARIANTS RP1 ILE-373; ASN-663; ASN-900 AND ASN-2113</scope>
    <scope>VARIANTS HIS-872; TYR-985; GLN-1595; THR-1670; PRO-1691 AND SER-1793</scope>
</reference>
<reference key="9">
    <citation type="journal article" date="2001" name="Invest. Ophthalmol. Vis. Sci.">
        <title>Clinical features and mutations in patients with dominant retinitis pigmentosa-1 (RP1).</title>
        <authorList>
            <person name="Berson E.L."/>
            <person name="Grimsby J.L."/>
            <person name="Adams S.M."/>
            <person name="McGee T.L."/>
            <person name="Sweklo E."/>
            <person name="Pierce E.A."/>
            <person name="Sandberg M.A."/>
            <person name="Dryja T.P."/>
        </authorList>
    </citation>
    <scope>VARIANTS GLY-168; THR-218; ILE-373; LEU-376; HIS-872; TYR-985; GLY-1072; SER-1356; PRO-1417; PRO-1425; THR-1670; PRO-1691; SER-1793; LEU-1935; TYR-2033 AND ASN-2066</scope>
</reference>
<reference key="10">
    <citation type="journal article" date="2003" name="J. Hum. Genet.">
        <title>Hypertriglyceridemia associated with amino acid variation Asn985Tyr of the RP1 gene.</title>
        <authorList>
            <person name="Fujita Y."/>
            <person name="Ezura Y."/>
            <person name="Emi M."/>
            <person name="Ono S."/>
            <person name="Takada D."/>
            <person name="Takahashi K."/>
            <person name="Uemura K."/>
            <person name="Iino Y."/>
            <person name="Katayama Y."/>
            <person name="Bujo H."/>
            <person name="Saito Y."/>
        </authorList>
    </citation>
    <scope>VARIANT TYR-985</scope>
</reference>
<reference key="11">
    <citation type="journal article" date="2005" name="J. Med. Genet.">
        <title>Novel association of RP1 gene mutations with autosomal recessive retinitis pigmentosa.</title>
        <authorList>
            <person name="Khaliq S."/>
            <person name="Abid A."/>
            <person name="Ismail M."/>
            <person name="Hameed A."/>
            <person name="Mohyuddin A."/>
            <person name="Lall P."/>
            <person name="Aziz A."/>
            <person name="Anwar K."/>
            <person name="Mehdi S.Q."/>
        </authorList>
    </citation>
    <scope>VARIANTS RP1 ILE-373 AND THR-669</scope>
</reference>
<reference key="12">
    <citation type="journal article" date="2006" name="Eye">
        <title>A novel missense RP1 mutation in retinitis pigmentosa.</title>
        <authorList>
            <person name="Chiang S.W."/>
            <person name="Wang D.Y."/>
            <person name="Chan W.M."/>
            <person name="Tam P.O."/>
            <person name="Chong K.K."/>
            <person name="Lam D.S."/>
            <person name="Pang C.P."/>
        </authorList>
    </citation>
    <scope>VARIANT RP1 GLY-984</scope>
    <scope>VARIANTS TRP-727 AND HIS-872</scope>
</reference>
<reference key="13">
    <citation type="journal article" date="2009" name="Mol. Vis.">
        <title>Molecular characterization of retinitis pigmentosa in Saudi Arabia.</title>
        <authorList>
            <person name="Aldahmesh M.A."/>
            <person name="Safieh L.A."/>
            <person name="Alkuraya H."/>
            <person name="Al-Rajhi A."/>
            <person name="Shamseldin H."/>
            <person name="Hashem M."/>
            <person name="Alzahrani F."/>
            <person name="Khan A.O."/>
            <person name="Alqahtani F."/>
            <person name="Rahbeeni Z."/>
            <person name="Alowain M."/>
            <person name="Khalak H."/>
            <person name="Al-Hazzaa S."/>
            <person name="Meyer B.F."/>
            <person name="Alkuraya F.S."/>
        </authorList>
    </citation>
    <scope>VARIANT RP1 GLU-202</scope>
</reference>
<reference key="14">
    <citation type="journal article" date="2010" name="Mol. Vis.">
        <title>Differential pattern of RP1 mutations in retinitis pigmentosa.</title>
        <authorList>
            <person name="Zhang X."/>
            <person name="Chen L.J."/>
            <person name="Law J.P."/>
            <person name="Lai T.Y."/>
            <person name="Chiang S.W."/>
            <person name="Tam P.O."/>
            <person name="Chu K.Y."/>
            <person name="Wang N."/>
            <person name="Zhang M."/>
            <person name="Pang C.P."/>
        </authorList>
    </citation>
    <scope>VARIANTS RP1 GLU-1370 AND LEU-1652</scope>
    <scope>VARIANTS LEU-408; ARG-706; HIS-872; TYR-985; THR-1670; PRO-1691 AND TYR-2033</scope>
</reference>
<reference key="15">
    <citation type="journal article" date="2012" name="Hum. Mutat.">
        <title>Next-generation genetic testing for retinitis pigmentosa.</title>
        <authorList>
            <person name="Neveling K."/>
            <person name="Collin R.W."/>
            <person name="Gilissen C."/>
            <person name="van Huet R.A."/>
            <person name="Visser L."/>
            <person name="Kwint M.P."/>
            <person name="Gijsen S.J."/>
            <person name="Zonneveld M.N."/>
            <person name="Wieskamp N."/>
            <person name="de Ligt J."/>
            <person name="Siemiatkowska A.M."/>
            <person name="Hoefsloot L.H."/>
            <person name="Buckley M.F."/>
            <person name="Kellner U."/>
            <person name="Branham K.E."/>
            <person name="den Hollander A.I."/>
            <person name="Hoischen A."/>
            <person name="Hoyng C."/>
            <person name="Klevering B.J."/>
            <person name="van den Born L.I."/>
            <person name="Veltman J.A."/>
            <person name="Cremers F.P."/>
            <person name="Scheffer H."/>
        </authorList>
    </citation>
    <scope>VARIANT RP1 ARG-172</scope>
</reference>
<sequence length="2156" mass="240661">MSDTPSTGFSIIHPTSSEGQVPPPRHLSLTHPVVAKRISFYKSGDPQFGGVRVVVNPRSFKSFDALLDNLSRKVPLPFGVRNISTPRGRHSITRLEELEDGESYLCSHGRKVQPVDLDKARRRPRPWLSSRAISAHSPPHPVAVAAPGMPRPPRSLVVFRNGDPKTRRAVLLSRRVTQSFEAFLQHLTEVMQRPVVKLYATDGRRVPSLQAVILSSGAVVAAGREPFKPGNYDIQKYLLPARLPGISQRVYPKGNAKSESRKISTHMSSSSRSQIYSVSSEKTHNNDCYLDYSFVPEKYLALEKNDSQNLPIYPSEDDIEKSIIFNQDGTMTVEMKVRFRIKEEETIKWTTTVSKTGPSNNDEKSEMSFPGRTESRSSGLKLAACSFSADVSPMERSSNQEGSLAEEINIQMTDQVAETCSSASWENATVDTDIIQGTQDQAKHRFYRPPTPGLRRVRQKKSVIGSVTLVSETEVQEKMIGQFSYSEERESGENKSEYHMFTHSCSKMSSVSNKPVLVQINNNDQMEESSLERKKENSLLKSSAISAGVIEITSQKMLEMSHNNGLPSTISNNSIVEEDVVDCVVLDNKTGIKNFKTYGNTNDRFSPISADATHFSSNNSGTDKNISEAPASEASSTVTARIDRLINEFAQCGLTKLPKNEKKILSSVASKKKKKSRQQAINSRYQDGQLATKGILNKNERINTKGRITKEMIVQDSDSPLKGGILCEEDLQKSDTVIESNTFCSKSNLNSTISKNFHRNKLNTTQNSKVQGLLTKRKSRSLNKISLGAPKKREIGQRDKVFPHNESKYCKSTFENKSLFHVFNILEQKPKDFYAPQSQAEVASGYLRGMAKKSLVSKVTDSHITLKSQKKRKGDKVKASAILSKQHATTRANSLASLKKPDFPEAIAHHSIQNYIQSWLQNINPYPTLKPIKSAPVCRNETSVVNCSNNSFSGNDPHTNSGKISNFVMESNKHITKIAGLTGDNLCKEGDKSFIANDTGEEDLHETQVGSLNDAYLVPLHEHCTLSQSAINDHNTKSHIAAEKSGPEKKLVYQEINLARKRQSVEAAIQVDPIEEETPKDLLPVLMLHQLQASVPGIHKTQNGVVQMPGSLAGVPFHSAICNSSTNLLLAWLLVLNLKGSMNSFCQVDAHKATNKSSETLALLEILKHIAITEEADDLKAAVANLVESTTSHFGLSEKEQDMVPIDLSANCSTVNIQSVPKCSENERTQGISSLDGGCSASEACAPEVCVLEVTCSPCEMCTVNKAYSPKETCNPSDTFFPSDGYGVDQTSMNKACFLGEVCSLTDTVFSDKACAQKENHTYEGACPIDETYVPVNVCNTIDFLNSKENTYTDNLDSTEELERGDDIQKDLNILTDPEYKNGFNTLVSHQNVSNLSSCGLCLSEKEAELDKKHSSLDDFENCSLRKFQDENAYTSFDMEEPRTSEEPGSITNSMTSSERNISELESFEELENHDTDIFNTVVNGGEQATEELIQEEVEASKTLELIDISSKNIMEEKRMNGIIYEIISKRLATPPSLDFCYDSKQNSEKETNEGETKMVKMMVKTMETGSYSESSPDLKKCIKSPVTSDWSDYRPDSDSEQPYKTSSDDPNDSGELTQEKEYNIGFVKRAIEKLYGKADIIKPSFFPGSTRKSQVCPYNSVEFQCSRKASLYDSEGQSFGSSEQVSSSSSMLQEFQEERQDKCDVSAVRDNYCRGDIVEPGTKQNDDSRILTDIEEGVLIDKGKWLLKENHLLRMSSENPGMCGNADTTSVDTLLDNNSSEVPYSHFGNLAPGPTMDELSSSELEELTQPLELKCNYFNMPHGSDSEPFHEDLLDVRNETCAKERIANHHTEEKGSHQSERVCTSVTHSFISAGNKVYPVSDDAIKNQPLPGSNMIHGTLQEADSLDKLYALCGQHCPILTVIIQPMNEEDRGFAYRKESDIENFLGFYLWMKIHPYLLQTDKNVFREENNKASMRQNLIDNAIGDIFDQFYFSNTFDLMGKRRKQKRINFLGLEEEGNLKKFQPDLKERFCMNFLHTSLLVVGNVDSNTQDLSGQTNEIFKAVDENNNLLNNRFQGSRTNLNQVVRENINCHYFFEMLGQACLLDICQVETSLNISNRNILELCMFEGENLFIWEEEDILNLTDLESSREQEDL</sequence>
<name>RP1_HUMAN</name>
<organism>
    <name type="scientific">Homo sapiens</name>
    <name type="common">Human</name>
    <dbReference type="NCBI Taxonomy" id="9606"/>
    <lineage>
        <taxon>Eukaryota</taxon>
        <taxon>Metazoa</taxon>
        <taxon>Chordata</taxon>
        <taxon>Craniata</taxon>
        <taxon>Vertebrata</taxon>
        <taxon>Euteleostomi</taxon>
        <taxon>Mammalia</taxon>
        <taxon>Eutheria</taxon>
        <taxon>Euarchontoglires</taxon>
        <taxon>Primates</taxon>
        <taxon>Haplorrhini</taxon>
        <taxon>Catarrhini</taxon>
        <taxon>Hominidae</taxon>
        <taxon>Homo</taxon>
    </lineage>
</organism>
<feature type="chain" id="PRO_0000097410" description="Oxygen-regulated protein 1">
    <location>
        <begin position="1"/>
        <end position="2156"/>
    </location>
</feature>
<feature type="domain" description="Doublecortin 1" evidence="2">
    <location>
        <begin position="36"/>
        <end position="118"/>
    </location>
</feature>
<feature type="domain" description="Doublecortin 2" evidence="2">
    <location>
        <begin position="154"/>
        <end position="233"/>
    </location>
</feature>
<feature type="region of interest" description="Disordered" evidence="3">
    <location>
        <begin position="1"/>
        <end position="25"/>
    </location>
</feature>
<feature type="region of interest" description="Disordered" evidence="3">
    <location>
        <begin position="353"/>
        <end position="375"/>
    </location>
</feature>
<feature type="region of interest" description="Disordered" evidence="3">
    <location>
        <begin position="666"/>
        <end position="686"/>
    </location>
</feature>
<feature type="region of interest" description="Disordered" evidence="3">
    <location>
        <begin position="1438"/>
        <end position="1458"/>
    </location>
</feature>
<feature type="region of interest" description="Disordered" evidence="3">
    <location>
        <begin position="1590"/>
        <end position="1621"/>
    </location>
</feature>
<feature type="compositionally biased region" description="Polar residues" evidence="3">
    <location>
        <begin position="1"/>
        <end position="19"/>
    </location>
</feature>
<feature type="sequence variant" id="VAR_066948" description="In dbSNP:rs1422215201." evidence="8">
    <original>R</original>
    <variation>G</variation>
    <location>
        <position position="168"/>
    </location>
</feature>
<feature type="sequence variant" id="VAR_068351" description="In RP1; dbSNP:rs180729424." evidence="16">
    <original>L</original>
    <variation>R</variation>
    <location>
        <position position="172"/>
    </location>
</feature>
<feature type="sequence variant" id="VAR_064182" description="In RP1; dbSNP:rs1805879513." evidence="13">
    <original>D</original>
    <variation>E</variation>
    <location>
        <position position="202"/>
    </location>
</feature>
<feature type="sequence variant" id="VAR_066949" description="In dbSNP:rs145691085." evidence="8">
    <original>A</original>
    <variation>T</variation>
    <location>
        <position position="218"/>
    </location>
</feature>
<feature type="sequence variant" id="VAR_051323" description="In dbSNP:rs16920614.">
    <original>Y</original>
    <variation>C</variation>
    <location>
        <position position="251"/>
    </location>
</feature>
<feature type="sequence variant" id="VAR_064183" description="In RP1; uncertain significance; dbSNP:rs77775126." evidence="7 8 11">
    <original>T</original>
    <variation>I</variation>
    <location>
        <position position="373"/>
    </location>
</feature>
<feature type="sequence variant" id="VAR_066950" description="In dbSNP:rs1166678265." evidence="8">
    <original>R</original>
    <variation>L</variation>
    <location>
        <position position="376"/>
    </location>
</feature>
<feature type="sequence variant" id="VAR_064466" evidence="14">
    <original>I</original>
    <variation>L</variation>
    <location>
        <position position="408"/>
    </location>
</feature>
<feature type="sequence variant" id="VAR_064467" description="In RP1; uncertain significance; dbSNP:rs372551375." evidence="6 7">
    <original>K</original>
    <variation>N</variation>
    <location>
        <position position="663"/>
    </location>
</feature>
<feature type="sequence variant" id="VAR_064468" description="In RP1; dbSNP:rs201725231." evidence="11">
    <original>A</original>
    <variation>T</variation>
    <location>
        <position position="669"/>
    </location>
</feature>
<feature type="sequence variant" id="VAR_064469" description="In dbSNP:rs199879316." evidence="14">
    <original>G</original>
    <variation>R</variation>
    <location>
        <position position="706"/>
    </location>
</feature>
<feature type="sequence variant" id="VAR_064470" evidence="12">
    <original>C</original>
    <variation>W</variation>
    <location>
        <position position="727"/>
    </location>
</feature>
<feature type="sequence variant" id="VAR_051324" description="In dbSNP:rs28399531.">
    <original>T</original>
    <variation>M</variation>
    <location>
        <position position="752"/>
    </location>
</feature>
<feature type="sequence variant" id="VAR_007810" description="In dbSNP:rs444772." evidence="5 7 8 12 14">
    <original>R</original>
    <variation>H</variation>
    <location>
        <position position="872"/>
    </location>
</feature>
<feature type="sequence variant" id="VAR_066951" description="In RP1." evidence="7">
    <original>K</original>
    <variation>N</variation>
    <location>
        <position position="900"/>
    </location>
</feature>
<feature type="sequence variant" id="VAR_051325" description="In dbSNP:rs16920621.">
    <original>V</original>
    <variation>L</variation>
    <location>
        <position position="945"/>
    </location>
</feature>
<feature type="sequence variant" id="VAR_064471" description="In RP1; dbSNP:rs200135800." evidence="12">
    <original>D</original>
    <variation>G</variation>
    <location>
        <position position="984"/>
    </location>
</feature>
<feature type="sequence variant" id="VAR_007811" description="In dbSNP:rs2293869." evidence="5 7 8 10 14">
    <original>N</original>
    <variation>Y</variation>
    <location>
        <position position="985"/>
    </location>
</feature>
<feature type="sequence variant" id="VAR_066952" description="In dbSNP:rs756775228." evidence="8">
    <original>D</original>
    <variation>G</variation>
    <location>
        <position position="1072"/>
    </location>
</feature>
<feature type="sequence variant" id="VAR_066953" evidence="8">
    <original>L</original>
    <variation>S</variation>
    <location>
        <position position="1356"/>
    </location>
</feature>
<feature type="sequence variant" id="VAR_064472" description="In RP1; uncertain significance; dbSNP:rs186594858." evidence="14">
    <original>K</original>
    <variation>E</variation>
    <location>
        <position position="1370"/>
    </location>
</feature>
<feature type="sequence variant" id="VAR_066954" description="In dbSNP:rs139294220." evidence="8">
    <original>L</original>
    <variation>P</variation>
    <location>
        <position position="1417"/>
    </location>
</feature>
<feature type="sequence variant" id="VAR_066955" description="In dbSNP:rs1338252422." evidence="8">
    <original>L</original>
    <variation>P</variation>
    <location>
        <position position="1425"/>
    </location>
</feature>
<feature type="sequence variant" id="VAR_051326" description="In dbSNP:rs35084330." evidence="6 7">
    <original>R</original>
    <variation>Q</variation>
    <location>
        <position position="1595"/>
    </location>
</feature>
<feature type="sequence variant" id="VAR_064473" description="In RP1; uncertain significance; dbSNP:rs760740229." evidence="14">
    <original>R</original>
    <variation>L</variation>
    <location>
        <position position="1652"/>
    </location>
</feature>
<feature type="sequence variant" id="VAR_007812" description="In dbSNP:rs446227." evidence="5 7 8 14">
    <original>A</original>
    <variation>T</variation>
    <location>
        <position position="1670"/>
    </location>
</feature>
<feature type="sequence variant" id="VAR_007813" description="In dbSNP:rs414352." evidence="5 7 8 14">
    <original>S</original>
    <variation>P</variation>
    <location>
        <position position="1691"/>
    </location>
</feature>
<feature type="sequence variant" id="VAR_066956" description="In dbSNP:rs143088423." evidence="7 8">
    <original>P</original>
    <variation>S</variation>
    <location>
        <position position="1793"/>
    </location>
</feature>
<feature type="sequence variant" id="VAR_064474" description="In RP1; uncertain significance; dbSNP:rs371969576." evidence="6">
    <original>L</original>
    <variation>P</variation>
    <location>
        <position position="1808"/>
    </location>
</feature>
<feature type="sequence variant" id="VAR_066957" description="In dbSNP:rs140137224." evidence="8">
    <original>F</original>
    <variation>L</variation>
    <location>
        <position position="1935"/>
    </location>
</feature>
<feature type="sequence variant" id="VAR_007814" description="In dbSNP:rs61739567." evidence="5 8 14">
    <original>C</original>
    <variation>Y</variation>
    <location>
        <position position="2033"/>
    </location>
</feature>
<feature type="sequence variant" id="VAR_066958" description="In dbSNP:rs149282954." evidence="8">
    <original>D</original>
    <variation>N</variation>
    <location>
        <position position="2066"/>
    </location>
</feature>
<feature type="sequence variant" id="VAR_066959" description="In RP1; dbSNP:rs137887415." evidence="7">
    <original>T</original>
    <variation>N</variation>
    <location>
        <position position="2113"/>
    </location>
</feature>
<proteinExistence type="evidence at protein level"/>
<accession>P56715</accession>
<keyword id="KW-0966">Cell projection</keyword>
<keyword id="KW-0969">Cilium</keyword>
<keyword id="KW-0970">Cilium biogenesis/degradation</keyword>
<keyword id="KW-0963">Cytoplasm</keyword>
<keyword id="KW-0206">Cytoskeleton</keyword>
<keyword id="KW-0225">Disease variant</keyword>
<keyword id="KW-0493">Microtubule</keyword>
<keyword id="KW-1267">Proteomics identification</keyword>
<keyword id="KW-1185">Reference proteome</keyword>
<keyword id="KW-0677">Repeat</keyword>
<keyword id="KW-0682">Retinitis pigmentosa</keyword>
<keyword id="KW-0716">Sensory transduction</keyword>
<keyword id="KW-0844">Vision</keyword>
<gene>
    <name type="primary">RP1</name>
    <name type="synonym">ORP1</name>
</gene>
<protein>
    <recommendedName>
        <fullName>Oxygen-regulated protein 1</fullName>
    </recommendedName>
    <alternativeName>
        <fullName>Retinitis pigmentosa 1 protein</fullName>
    </alternativeName>
    <alternativeName>
        <fullName>Retinitis pigmentosa RP1 protein</fullName>
    </alternativeName>
</protein>
<dbReference type="EMBL" id="AF143226">
    <property type="protein sequence ID" value="AAD44197.1"/>
    <property type="molecule type" value="Genomic_DNA"/>
</dbReference>
<dbReference type="EMBL" id="AF143224">
    <property type="protein sequence ID" value="AAD44197.1"/>
    <property type="status" value="JOINED"/>
    <property type="molecule type" value="Genomic_DNA"/>
</dbReference>
<dbReference type="EMBL" id="AF143225">
    <property type="protein sequence ID" value="AAD44197.1"/>
    <property type="status" value="JOINED"/>
    <property type="molecule type" value="Genomic_DNA"/>
</dbReference>
<dbReference type="EMBL" id="AF143222">
    <property type="protein sequence ID" value="AAD44198.1"/>
    <property type="molecule type" value="mRNA"/>
</dbReference>
<dbReference type="EMBL" id="AF141021">
    <property type="protein sequence ID" value="AAD42072.1"/>
    <property type="molecule type" value="mRNA"/>
</dbReference>
<dbReference type="EMBL" id="AF152242">
    <property type="protein sequence ID" value="AAD46774.1"/>
    <property type="molecule type" value="Genomic_DNA"/>
</dbReference>
<dbReference type="EMBL" id="AF152240">
    <property type="protein sequence ID" value="AAD46774.1"/>
    <property type="status" value="JOINED"/>
    <property type="molecule type" value="Genomic_DNA"/>
</dbReference>
<dbReference type="EMBL" id="AF152241">
    <property type="protein sequence ID" value="AAD46774.1"/>
    <property type="status" value="JOINED"/>
    <property type="molecule type" value="Genomic_DNA"/>
</dbReference>
<dbReference type="EMBL" id="AF146592">
    <property type="protein sequence ID" value="AAD46769.1"/>
    <property type="molecule type" value="mRNA"/>
</dbReference>
<dbReference type="EMBL" id="AF128525">
    <property type="status" value="NOT_ANNOTATED_CDS"/>
    <property type="molecule type" value="Genomic_DNA"/>
</dbReference>
<dbReference type="CCDS" id="CCDS6160.1"/>
<dbReference type="RefSeq" id="NP_006260.1">
    <property type="nucleotide sequence ID" value="NM_006269.2"/>
</dbReference>
<dbReference type="RefSeq" id="XP_016869211.1">
    <property type="nucleotide sequence ID" value="XM_017013722.1"/>
</dbReference>
<dbReference type="SMR" id="P56715"/>
<dbReference type="BioGRID" id="112028">
    <property type="interactions" value="8"/>
</dbReference>
<dbReference type="FunCoup" id="P56715">
    <property type="interactions" value="13"/>
</dbReference>
<dbReference type="IntAct" id="P56715">
    <property type="interactions" value="3"/>
</dbReference>
<dbReference type="STRING" id="9606.ENSP00000220676"/>
<dbReference type="TCDB" id="9.B.449.1.1">
    <property type="family name" value="the oxygen-regulated protein (orp) family"/>
</dbReference>
<dbReference type="GlyGen" id="P56715">
    <property type="glycosylation" value="8 sites, 1 O-linked glycan (6 sites)"/>
</dbReference>
<dbReference type="iPTMnet" id="P56715"/>
<dbReference type="PhosphoSitePlus" id="P56715"/>
<dbReference type="BioMuta" id="RP1"/>
<dbReference type="DMDM" id="6225804"/>
<dbReference type="jPOST" id="P56715"/>
<dbReference type="MassIVE" id="P56715"/>
<dbReference type="PaxDb" id="9606-ENSP00000220676"/>
<dbReference type="PeptideAtlas" id="P56715"/>
<dbReference type="ProteomicsDB" id="56940"/>
<dbReference type="Antibodypedia" id="50968">
    <property type="antibodies" value="51 antibodies from 10 providers"/>
</dbReference>
<dbReference type="DNASU" id="6101"/>
<dbReference type="Ensembl" id="ENST00000220676.2">
    <property type="protein sequence ID" value="ENSP00000220676.1"/>
    <property type="gene ID" value="ENSG00000104237.11"/>
</dbReference>
<dbReference type="GeneID" id="6101"/>
<dbReference type="KEGG" id="hsa:6101"/>
<dbReference type="MANE-Select" id="ENST00000220676.2">
    <property type="protein sequence ID" value="ENSP00000220676.1"/>
    <property type="RefSeq nucleotide sequence ID" value="NM_006269.2"/>
    <property type="RefSeq protein sequence ID" value="NP_006260.1"/>
</dbReference>
<dbReference type="UCSC" id="uc003xsd.1">
    <property type="organism name" value="human"/>
</dbReference>
<dbReference type="AGR" id="HGNC:10263"/>
<dbReference type="CTD" id="6101"/>
<dbReference type="DisGeNET" id="6101"/>
<dbReference type="GeneCards" id="RP1"/>
<dbReference type="GeneReviews" id="RP1"/>
<dbReference type="HGNC" id="HGNC:10263">
    <property type="gene designation" value="RP1"/>
</dbReference>
<dbReference type="HPA" id="ENSG00000104237">
    <property type="expression patterns" value="Tissue enriched (retina)"/>
</dbReference>
<dbReference type="MalaCards" id="RP1"/>
<dbReference type="MIM" id="180100">
    <property type="type" value="phenotype"/>
</dbReference>
<dbReference type="MIM" id="603937">
    <property type="type" value="gene"/>
</dbReference>
<dbReference type="neXtProt" id="NX_P56715"/>
<dbReference type="OpenTargets" id="ENSG00000104237"/>
<dbReference type="Orphanet" id="791">
    <property type="disease" value="Retinitis pigmentosa"/>
</dbReference>
<dbReference type="PharmGKB" id="PA34635"/>
<dbReference type="VEuPathDB" id="HostDB:ENSG00000104237"/>
<dbReference type="eggNOG" id="KOG1181">
    <property type="taxonomic scope" value="Eukaryota"/>
</dbReference>
<dbReference type="eggNOG" id="KOG3757">
    <property type="taxonomic scope" value="Eukaryota"/>
</dbReference>
<dbReference type="GeneTree" id="ENSGT00940000154242"/>
<dbReference type="HOGENOM" id="CLU_232270_0_0_1"/>
<dbReference type="InParanoid" id="P56715"/>
<dbReference type="OrthoDB" id="1738954at2759"/>
<dbReference type="PAN-GO" id="P56715">
    <property type="GO annotations" value="4 GO annotations based on evolutionary models"/>
</dbReference>
<dbReference type="PhylomeDB" id="P56715"/>
<dbReference type="TreeFam" id="TF318770"/>
<dbReference type="PathwayCommons" id="P56715"/>
<dbReference type="SignaLink" id="P56715"/>
<dbReference type="BioGRID-ORCS" id="6101">
    <property type="hits" value="5 hits in 1148 CRISPR screens"/>
</dbReference>
<dbReference type="ChiTaRS" id="RP1">
    <property type="organism name" value="human"/>
</dbReference>
<dbReference type="GeneWiki" id="RP1"/>
<dbReference type="GenomeRNAi" id="6101"/>
<dbReference type="Pharos" id="P56715">
    <property type="development level" value="Tdark"/>
</dbReference>
<dbReference type="PRO" id="PR:P56715"/>
<dbReference type="Proteomes" id="UP000005640">
    <property type="component" value="Chromosome 8"/>
</dbReference>
<dbReference type="RNAct" id="P56715">
    <property type="molecule type" value="protein"/>
</dbReference>
<dbReference type="Bgee" id="ENSG00000104237">
    <property type="expression patterns" value="Expressed in right uterine tube and 71 other cell types or tissues"/>
</dbReference>
<dbReference type="ExpressionAtlas" id="P56715">
    <property type="expression patterns" value="baseline and differential"/>
</dbReference>
<dbReference type="GO" id="GO:0005930">
    <property type="term" value="C:axoneme"/>
    <property type="evidence" value="ECO:0000318"/>
    <property type="project" value="GO_Central"/>
</dbReference>
<dbReference type="GO" id="GO:0097542">
    <property type="term" value="C:ciliary tip"/>
    <property type="evidence" value="ECO:0007669"/>
    <property type="project" value="Ensembl"/>
</dbReference>
<dbReference type="GO" id="GO:0005874">
    <property type="term" value="C:microtubule"/>
    <property type="evidence" value="ECO:0007669"/>
    <property type="project" value="UniProtKB-KW"/>
</dbReference>
<dbReference type="GO" id="GO:0005875">
    <property type="term" value="C:microtubule associated complex"/>
    <property type="evidence" value="ECO:0000250"/>
    <property type="project" value="UniProtKB"/>
</dbReference>
<dbReference type="GO" id="GO:0032391">
    <property type="term" value="C:photoreceptor connecting cilium"/>
    <property type="evidence" value="ECO:0000314"/>
    <property type="project" value="MGI"/>
</dbReference>
<dbReference type="GO" id="GO:0001917">
    <property type="term" value="C:photoreceptor inner segment"/>
    <property type="evidence" value="ECO:0000314"/>
    <property type="project" value="UniProtKB"/>
</dbReference>
<dbReference type="GO" id="GO:0001750">
    <property type="term" value="C:photoreceptor outer segment"/>
    <property type="evidence" value="ECO:0000250"/>
    <property type="project" value="UniProtKB"/>
</dbReference>
<dbReference type="GO" id="GO:0008017">
    <property type="term" value="F:microtubule binding"/>
    <property type="evidence" value="ECO:0000250"/>
    <property type="project" value="UniProtKB"/>
</dbReference>
<dbReference type="GO" id="GO:0035082">
    <property type="term" value="P:axoneme assembly"/>
    <property type="evidence" value="ECO:0000250"/>
    <property type="project" value="UniProtKB"/>
</dbReference>
<dbReference type="GO" id="GO:0071482">
    <property type="term" value="P:cellular response to light stimulus"/>
    <property type="evidence" value="ECO:0007669"/>
    <property type="project" value="Ensembl"/>
</dbReference>
<dbReference type="GO" id="GO:0035556">
    <property type="term" value="P:intracellular signal transduction"/>
    <property type="evidence" value="ECO:0007669"/>
    <property type="project" value="InterPro"/>
</dbReference>
<dbReference type="GO" id="GO:0042461">
    <property type="term" value="P:photoreceptor cell development"/>
    <property type="evidence" value="ECO:0000250"/>
    <property type="project" value="UniProtKB"/>
</dbReference>
<dbReference type="GO" id="GO:0045494">
    <property type="term" value="P:photoreceptor cell maintenance"/>
    <property type="evidence" value="ECO:0000250"/>
    <property type="project" value="UniProtKB"/>
</dbReference>
<dbReference type="GO" id="GO:0035845">
    <property type="term" value="P:photoreceptor cell outer segment organization"/>
    <property type="evidence" value="ECO:0000250"/>
    <property type="project" value="UniProtKB"/>
</dbReference>
<dbReference type="GO" id="GO:0007603">
    <property type="term" value="P:phototransduction, visible light"/>
    <property type="evidence" value="ECO:0000304"/>
    <property type="project" value="ProtInc"/>
</dbReference>
<dbReference type="GO" id="GO:1902857">
    <property type="term" value="P:positive regulation of non-motile cilium assembly"/>
    <property type="evidence" value="ECO:0007669"/>
    <property type="project" value="Ensembl"/>
</dbReference>
<dbReference type="GO" id="GO:0060041">
    <property type="term" value="P:retina development in camera-type eye"/>
    <property type="evidence" value="ECO:0000318"/>
    <property type="project" value="GO_Central"/>
</dbReference>
<dbReference type="GO" id="GO:0046549">
    <property type="term" value="P:retinal cone cell development"/>
    <property type="evidence" value="ECO:0000250"/>
    <property type="project" value="UniProtKB"/>
</dbReference>
<dbReference type="GO" id="GO:0046548">
    <property type="term" value="P:retinal rod cell development"/>
    <property type="evidence" value="ECO:0000250"/>
    <property type="project" value="UniProtKB"/>
</dbReference>
<dbReference type="GO" id="GO:0007601">
    <property type="term" value="P:visual perception"/>
    <property type="evidence" value="ECO:0000304"/>
    <property type="project" value="ProtInc"/>
</dbReference>
<dbReference type="CDD" id="cd17145">
    <property type="entry name" value="DCX1_RP1"/>
    <property type="match status" value="1"/>
</dbReference>
<dbReference type="CDD" id="cd17147">
    <property type="entry name" value="DCX2_RP1"/>
    <property type="match status" value="1"/>
</dbReference>
<dbReference type="FunFam" id="3.10.20.230:FF:000006">
    <property type="entry name" value="Oxygen-regulated protein 1"/>
    <property type="match status" value="1"/>
</dbReference>
<dbReference type="FunFam" id="3.10.20.230:FF:000007">
    <property type="entry name" value="Oxygen-regulated protein 1"/>
    <property type="match status" value="1"/>
</dbReference>
<dbReference type="Gene3D" id="3.10.20.230">
    <property type="entry name" value="Doublecortin domain"/>
    <property type="match status" value="2"/>
</dbReference>
<dbReference type="InterPro" id="IPR003533">
    <property type="entry name" value="Doublecortin_dom"/>
</dbReference>
<dbReference type="InterPro" id="IPR036572">
    <property type="entry name" value="Doublecortin_dom_sf"/>
</dbReference>
<dbReference type="PANTHER" id="PTHR23005:SF4">
    <property type="entry name" value="OXYGEN-REGULATED PROTEIN 1"/>
    <property type="match status" value="1"/>
</dbReference>
<dbReference type="PANTHER" id="PTHR23005">
    <property type="entry name" value="RETINITIS PIGMENTOSA 1 PROTEIN"/>
    <property type="match status" value="1"/>
</dbReference>
<dbReference type="Pfam" id="PF03607">
    <property type="entry name" value="DCX"/>
    <property type="match status" value="2"/>
</dbReference>
<dbReference type="SMART" id="SM00537">
    <property type="entry name" value="DCX"/>
    <property type="match status" value="2"/>
</dbReference>
<dbReference type="SUPFAM" id="SSF89837">
    <property type="entry name" value="Doublecortin (DC)"/>
    <property type="match status" value="2"/>
</dbReference>
<dbReference type="PROSITE" id="PS50309">
    <property type="entry name" value="DC"/>
    <property type="match status" value="2"/>
</dbReference>
<comment type="function">
    <text evidence="1">Microtubule-associated protein regulating the stability and length of the microtubule-based axoneme of photoreceptors. Required for the differentiation of photoreceptor cells, it plays a role in the organization of the outer segment of rod and cone photoreceptors ensuring the correct orientation and higher-order stacking of outer segment disks along the photoreceptor axoneme (By similarity).</text>
</comment>
<comment type="subunit">
    <text evidence="1">Interacts (via the doublecortin domains) with microtubules. Interacts with RP1L1 (By similarity). Interacts with MAK (By similarity).</text>
</comment>
<comment type="subcellular location">
    <subcellularLocation>
        <location evidence="1">Cytoplasm</location>
        <location evidence="1">Cytoskeleton</location>
        <location evidence="1">Cilium axoneme</location>
    </subcellularLocation>
    <subcellularLocation>
        <location evidence="9">Cell projection</location>
        <location evidence="9">Cilium</location>
        <location evidence="9">Photoreceptor outer segment</location>
    </subcellularLocation>
    <text>Specifically localized in the connecting cilia of rod and cone photoreceptors.</text>
</comment>
<comment type="tissue specificity">
    <text>Expressed in retina. Not expressed in heart, brain, placenta, lung, liver, skeletal muscle, kidney, spleen and pancreas.</text>
</comment>
<comment type="domain">
    <text evidence="1">The doublecortin domains, which mediate interaction with microtubules, are required for regulation of microtubule polymerization and function in photoreceptor differentiation.</text>
</comment>
<comment type="disease" evidence="4 6 7 11 12 13 14 15 16">
    <disease id="DI-00971">
        <name>Retinitis pigmentosa 1</name>
        <acronym>RP1</acronym>
        <description>A retinal dystrophy belonging to the group of pigmentary retinopathies. Retinitis pigmentosa is characterized by retinal pigment deposits visible on fundus examination and primary loss of rod photoreceptor cells followed by secondary loss of cone photoreceptors. Patients typically have night vision blindness and loss of midperipheral visual field. As their condition progresses, they lose their far peripheral visual field and eventually central vision as well.</description>
        <dbReference type="MIM" id="180100"/>
    </disease>
    <text>The disease is caused by variants affecting the gene represented in this entry.</text>
</comment>
<comment type="online information" name="RetNet">
    <link uri="https://retnet.org/"/>
    <text>Retinal information network</text>
</comment>
<evidence type="ECO:0000250" key="1"/>
<evidence type="ECO:0000255" key="2">
    <source>
        <dbReference type="PROSITE-ProRule" id="PRU00072"/>
    </source>
</evidence>
<evidence type="ECO:0000256" key="3">
    <source>
        <dbReference type="SAM" id="MobiDB-lite"/>
    </source>
</evidence>
<evidence type="ECO:0000269" key="4">
    <source>
    </source>
</evidence>
<evidence type="ECO:0000269" key="5">
    <source>
    </source>
</evidence>
<evidence type="ECO:0000269" key="6">
    <source>
    </source>
</evidence>
<evidence type="ECO:0000269" key="7">
    <source>
    </source>
</evidence>
<evidence type="ECO:0000269" key="8">
    <source>
    </source>
</evidence>
<evidence type="ECO:0000269" key="9">
    <source>
    </source>
</evidence>
<evidence type="ECO:0000269" key="10">
    <source>
    </source>
</evidence>
<evidence type="ECO:0000269" key="11">
    <source>
    </source>
</evidence>
<evidence type="ECO:0000269" key="12">
    <source>
    </source>
</evidence>
<evidence type="ECO:0000269" key="13">
    <source>
    </source>
</evidence>
<evidence type="ECO:0000269" key="14">
    <source>
    </source>
</evidence>
<evidence type="ECO:0000269" key="15">
    <source>
    </source>
</evidence>
<evidence type="ECO:0000269" key="16">
    <source>
    </source>
</evidence>